<comment type="function">
    <text evidence="2 9 10">Transcription factor that mediates a transcriptional program in various innate and adaptive immune tissue-resident lymphocyte T cell types such as tissue-resident memory T (Trm), natural killer (trNK) and natural killer T (NKT) cells and negatively regulates gene expression of proteins that promote the egress of tissue-resident T-cell populations from non-lymphoid organs (PubMed:27102484). Plays a role in the development, retention and long-term establishment of adaptive and innate tissue-resident lymphocyte T cell types in non-lymphoid organs, such as the skin and gut, but also in other nonbarrier tissues like liver and kidney, and therefore may provide immediate immunological protection against reactivating infections or viral reinfection (PubMed:27102484). Binds specifically to the PRDI element in the promoter of the beta-interferon gene (By similarity). Drives the maturation of B-lymphocytes into Ig secreting cells (By similarity). Associates with the transcriptional repressor ZNF683 to chromatin at gene promoter regions (PubMed:27102484). Binds to the promoter and acts as a transcriptional repressor of IRF8, thereby promotes transcription of osteoclast differentiation factors such as NFATC1 and EEIG1 (PubMed:32741026).</text>
</comment>
<comment type="subunit">
    <text evidence="2 7 10">Interacts with PRMT5 (PubMed:16699504). Interacts with FBXO10 (By similarity). Interacts with FBXO11 (By similarity). Interacts with multiple nuclear sumoylation E3 ligases, including CBX4, PIAS1, PIAS2, PIAS3, PIAS4, PML and RNF4, but not RANBP2 (By similarity). Interacts with LDB1, SMARCD3 and SMARCC1 (By similarity). Interacts with EEIG1; following TNFSF11/RANKL stimulation in bone marrow-derived macrophages, the interaction promotes the binding of PRDM1/BLIMP1 to the gene promoter of IRF8 (PubMed:32741026).</text>
</comment>
<comment type="interaction">
    <interactant intactId="EBI-7000804">
        <id>Q60636</id>
    </interactant>
    <interactant intactId="EBI-80140">
        <id>P63165</id>
        <label>SUMO1</label>
    </interactant>
    <organismsDiffer>true</organismsDiffer>
    <experiments>3</experiments>
</comment>
<comment type="subcellular location">
    <subcellularLocation>
        <location evidence="11">Nucleus</location>
    </subcellularLocation>
    <subcellularLocation>
        <location evidence="2">Cytoplasm</location>
    </subcellularLocation>
</comment>
<comment type="alternative products">
    <event type="alternative promoter"/>
    <event type="alternative splicing"/>
    <isoform>
        <id>Q60636-1</id>
        <name>1</name>
        <sequence type="displayed"/>
    </isoform>
    <isoform>
        <id>Q60636-2</id>
        <name>2</name>
        <name>1A</name>
        <sequence type="described" ref="VSP_039189"/>
    </isoform>
    <isoform>
        <id>Q60636-3</id>
        <name>3</name>
        <name>1B</name>
        <sequence type="described" ref="VSP_041570"/>
    </isoform>
    <isoform>
        <id>Q60636-4</id>
        <name>4</name>
        <name>1C</name>
        <sequence type="described" ref="VSP_041571"/>
    </isoform>
    <isoform>
        <id>Q60636-5</id>
        <name>5</name>
        <name>delta exon 7</name>
        <sequence type="described" ref="VSP_041572"/>
    </isoform>
</comment>
<comment type="tissue specificity">
    <text evidence="6 8 9 10 11">Expressed in bone marrow macrophages (at protein level) (PubMed:32741026). Expressed in innate lymphocytes, including tissue-resident conventional natural killer (cNK) cells in liver (PubMed:27102484). Expressed also weakly in tissue-resident natural killer (trNK) and natural killer T (NKT) cells in liver (PubMed:27102484).</text>
</comment>
<comment type="tissue specificity">
    <molecule>Isoform 1</molecule>
    <text>Expressed in bone marrow, spleen and lymph node but not in brain, heart, kidney, liver, ovary or muscle. Weak expression detected in the lung.</text>
</comment>
<comment type="tissue specificity">
    <molecule>Isoform 3</molecule>
    <text evidence="8">Expressed only in the yolk sac.</text>
</comment>
<comment type="tissue specificity">
    <molecule>Isoform 4</molecule>
    <text evidence="8">Expressed in embryo, yolk sac, placenta, splenocytes, and activated T-cells.</text>
</comment>
<comment type="induction">
    <text>By lymphokines, specifically IL-2 and IL-5. Up-regulated during dendritic cell maturation.</text>
</comment>
<comment type="induction">
    <text evidence="9">(Microbial infection) Up-regulated in response to Herpes simplex virus (HSV) infection in skin and spleen memory CD8(+) T cells.</text>
</comment>
<comment type="induction">
    <text evidence="9">(Microbial infection) Up-regulated in response to Lymphocytic choriomeningitis virus (LCMV) in memory CD8(+) T cells.</text>
</comment>
<comment type="PTM">
    <text evidence="2">Sumoylation at Lys-847 by PIAS1 increases transcriptional repressor activity, and is critical for plasma cell differentiation (By similarity). Can be sumoylated with SUMO1 and SUMO2 by PML. Degradation of the wild-type protein mostly depends upon sumoylation, rather than ubiquitination (By similarity). Desumoylated by SENP1 and SENP6 (By similarity).</text>
</comment>
<comment type="PTM">
    <text evidence="2">Ubiquitinated by SCF(FBXO11), leading to its degradation by the proteasome.</text>
</comment>
<comment type="disruption phenotype">
    <text evidence="8 9">Early embryonic lethality (PubMed:19737919). Compound heterozygotes display germ cell defects and a rudimentary or missing fifth digit of the forelimb (PubMed:19737919). Conditional knockout in lymphocyte T cells show a weak reduction in tissue-resident memory T (Trm) cell population maintenance in the skin, gut, liver and kidney but not of splenic T cells (PubMed:27102484). Double knockouts for PRDM1/BLIMP1 and ZNF683 result in a strong inhibition of Trm cell population maintenance but not of circulating memory cells (PubMed:27102484). Display an enhancement of natural killer T (NKT) cells migration preferentially to the white pulp of the spleen in response to chemotactic stimuli (PubMed:27102484).</text>
</comment>
<comment type="miscellaneous">
    <molecule>Isoform 1</molecule>
    <text>Produced by alternative splicing.</text>
</comment>
<comment type="miscellaneous">
    <molecule>Isoform 2</molecule>
    <text evidence="14">Produced by alternative splicing of isoform 1.</text>
</comment>
<comment type="miscellaneous">
    <molecule>Isoform 3</molecule>
    <text evidence="14">Produced by alternative promoter usage of isoform 2.</text>
</comment>
<comment type="miscellaneous">
    <molecule>Isoform 4</molecule>
    <text evidence="14">Produced by alternative promoter usage of isoform 2.</text>
</comment>
<comment type="miscellaneous">
    <molecule>Isoform 5</molecule>
    <text evidence="14">Produced by alternative splicing of isoform 1. Does not bind DNA.</text>
</comment>
<comment type="similarity">
    <text evidence="4">Belongs to the class V-like SAM-binding methyltransferase superfamily.</text>
</comment>
<comment type="sequence caution" evidence="14">
    <conflict type="erroneous initiation">
        <sequence resource="EMBL-CDS" id="AAI29802"/>
    </conflict>
    <text>Extended N-terminus.</text>
</comment>
<gene>
    <name type="primary">Prdm1</name>
    <name type="synonym">Blimp1</name>
</gene>
<proteinExistence type="evidence at protein level"/>
<accession>Q60636</accession>
<accession>A2VDE8</accession>
<accession>Q3UET9</accession>
<sequence>MREAYLRCWIFSWKNVWVRPCQRLHFKTVLLQGSLLYTALDSYSTVQAAPKSSSGSVKFQGLAETGIMKMDMEDADMTLWTEAEFEEKCTYIVNDHPWDSGADGGTSVQAEASLPRNLLFKYAANNSKEVIGVVSKEYIPKGTRFGPLIGEVYTNDTVPKNANRKYFWRIYSREEFHHFIDGFNEEKSNWMRYVNPAHSAREQNLAACQNGMNIYFYTIKPIPANQELLVWYCRDFAERLHYPYPGELTVINLTQTESNPKQYSSEKNELYPKSVPKREYSVKEILKLDSNPSKRKDIYRSNISPFTLEKDMDGFRKNGSPDMPFYPRVVYPIRAPLPEDFLKASLAYGMERPTYITHSPLPSSTTPSPPASSSPEQSLKSSSPHSSPGNTVSPLAPGLPEHRDSYSYLNVSYGSEGLGSYPGYAPAPHLPPAFIPSYNAHYPKFLLPPYGISSNGLSTMNNINGINNFSLFPRLYPVYSNLLSGSSLPHPMLNPASLPSSLPTDGARRLLPPEHPKEVLIPAPHSAFSLTGAAASMKDESSPPSGSPTAGTAATSEHVVQPKATSSVMAAPSTDGAMNLIKNKRNMTGYKTLPYPLKKQNGKIKYECNVCAKTFGQLSNLKVHLRVHSGERPFKCQTCNKGFTQLAHLQKHYLVHTGEKPHECQVCHKRFSSTSNLKTHLRLHSGEKPYQCKVCPAKFTQFVHLKLHKRLHTRERPHKCAQCHKSYIHLCSLKVHLKGNCPAGPAAGLPLEDLTRINEEIERFDISDNADRLEDMEDSVDVTSMVEKEILAVVRKEKEETSLKVSLQRNMGNGLLSSGCSLYESSDLSLMKLPHSNPLPLVPVKVKQETVEPMDP</sequence>
<dbReference type="EC" id="2.1.1.-"/>
<dbReference type="EMBL" id="U08185">
    <property type="protein sequence ID" value="AAA19252.1"/>
    <property type="molecule type" value="mRNA"/>
</dbReference>
<dbReference type="EMBL" id="AF305539">
    <property type="protein sequence ID" value="AAG42212.1"/>
    <property type="molecule type" value="Genomic_DNA"/>
</dbReference>
<dbReference type="EMBL" id="AF305534">
    <property type="protein sequence ID" value="AAG42212.1"/>
    <property type="status" value="JOINED"/>
    <property type="molecule type" value="Genomic_DNA"/>
</dbReference>
<dbReference type="EMBL" id="AF305535">
    <property type="protein sequence ID" value="AAG42212.1"/>
    <property type="status" value="JOINED"/>
    <property type="molecule type" value="Genomic_DNA"/>
</dbReference>
<dbReference type="EMBL" id="AF305536">
    <property type="protein sequence ID" value="AAG42212.1"/>
    <property type="status" value="JOINED"/>
    <property type="molecule type" value="Genomic_DNA"/>
</dbReference>
<dbReference type="EMBL" id="AF305537">
    <property type="protein sequence ID" value="AAG42212.1"/>
    <property type="status" value="JOINED"/>
    <property type="molecule type" value="Genomic_DNA"/>
</dbReference>
<dbReference type="EMBL" id="AF305538">
    <property type="protein sequence ID" value="AAG42212.1"/>
    <property type="status" value="JOINED"/>
    <property type="molecule type" value="Genomic_DNA"/>
</dbReference>
<dbReference type="EMBL" id="AK077622">
    <property type="status" value="NOT_ANNOTATED_CDS"/>
    <property type="molecule type" value="mRNA"/>
</dbReference>
<dbReference type="EMBL" id="AK149344">
    <property type="protein sequence ID" value="BAE28822.1"/>
    <property type="molecule type" value="mRNA"/>
</dbReference>
<dbReference type="EMBL" id="BC129801">
    <property type="protein sequence ID" value="AAI29802.1"/>
    <property type="status" value="ALT_INIT"/>
    <property type="molecule type" value="mRNA"/>
</dbReference>
<dbReference type="CCDS" id="CCDS23825.2">
    <molecule id="Q60636-2"/>
</dbReference>
<dbReference type="PIR" id="A53503">
    <property type="entry name" value="A53503"/>
</dbReference>
<dbReference type="RefSeq" id="NP_001392858.1">
    <molecule id="Q60636-1"/>
    <property type="nucleotide sequence ID" value="NM_001405929.1"/>
</dbReference>
<dbReference type="RefSeq" id="NP_001392860.1">
    <molecule id="Q60636-4"/>
    <property type="nucleotide sequence ID" value="NM_001405931.1"/>
</dbReference>
<dbReference type="RefSeq" id="NP_001392861.1">
    <molecule id="Q60636-3"/>
    <property type="nucleotide sequence ID" value="NM_001405932.1"/>
</dbReference>
<dbReference type="RefSeq" id="NP_001392862.1">
    <molecule id="Q60636-3"/>
    <property type="nucleotide sequence ID" value="NM_001405933.1"/>
</dbReference>
<dbReference type="RefSeq" id="NP_031574.2">
    <molecule id="Q60636-2"/>
    <property type="nucleotide sequence ID" value="NM_007548.5"/>
</dbReference>
<dbReference type="RefSeq" id="XP_006512565.1">
    <property type="nucleotide sequence ID" value="XM_006512502.3"/>
</dbReference>
<dbReference type="RefSeq" id="XP_006512566.1">
    <property type="nucleotide sequence ID" value="XM_006512503.2"/>
</dbReference>
<dbReference type="RefSeq" id="XP_006512568.1">
    <property type="nucleotide sequence ID" value="XM_006512505.2"/>
</dbReference>
<dbReference type="RefSeq" id="XP_011241411.1">
    <molecule id="Q60636-3"/>
    <property type="nucleotide sequence ID" value="XM_011243109.3"/>
</dbReference>
<dbReference type="RefSeq" id="XP_036011460.1">
    <molecule id="Q60636-5"/>
    <property type="nucleotide sequence ID" value="XM_036155567.1"/>
</dbReference>
<dbReference type="SMR" id="Q60636"/>
<dbReference type="BioGRID" id="198355">
    <property type="interactions" value="9"/>
</dbReference>
<dbReference type="FunCoup" id="Q60636">
    <property type="interactions" value="2848"/>
</dbReference>
<dbReference type="IntAct" id="Q60636">
    <property type="interactions" value="1"/>
</dbReference>
<dbReference type="MINT" id="Q60636"/>
<dbReference type="STRING" id="10090.ENSMUSP00000101129"/>
<dbReference type="GlyGen" id="Q60636">
    <property type="glycosylation" value="1 site"/>
</dbReference>
<dbReference type="iPTMnet" id="Q60636"/>
<dbReference type="PhosphoSitePlus" id="Q60636"/>
<dbReference type="jPOST" id="Q60636"/>
<dbReference type="PaxDb" id="10090-ENSMUSP00000101129"/>
<dbReference type="PeptideAtlas" id="Q60636"/>
<dbReference type="ProteomicsDB" id="291552">
    <molecule id="Q60636-1"/>
</dbReference>
<dbReference type="ProteomicsDB" id="291553">
    <molecule id="Q60636-2"/>
</dbReference>
<dbReference type="ProteomicsDB" id="291554">
    <molecule id="Q60636-3"/>
</dbReference>
<dbReference type="ProteomicsDB" id="291555">
    <molecule id="Q60636-4"/>
</dbReference>
<dbReference type="ProteomicsDB" id="291556">
    <molecule id="Q60636-5"/>
</dbReference>
<dbReference type="Antibodypedia" id="19038">
    <property type="antibodies" value="701 antibodies from 38 providers"/>
</dbReference>
<dbReference type="DNASU" id="12142"/>
<dbReference type="Ensembl" id="ENSMUST00000039174.11">
    <molecule id="Q60636-1"/>
    <property type="protein sequence ID" value="ENSMUSP00000039248.5"/>
    <property type="gene ID" value="ENSMUSG00000038151.14"/>
</dbReference>
<dbReference type="Ensembl" id="ENSMUST00000105490.3">
    <molecule id="Q60636-2"/>
    <property type="protein sequence ID" value="ENSMUSP00000101129.3"/>
    <property type="gene ID" value="ENSMUSG00000038151.14"/>
</dbReference>
<dbReference type="Ensembl" id="ENSMUST00000218369.2">
    <molecule id="Q60636-4"/>
    <property type="protein sequence ID" value="ENSMUSP00000151237.2"/>
    <property type="gene ID" value="ENSMUSG00000038151.14"/>
</dbReference>
<dbReference type="GeneID" id="12142"/>
<dbReference type="KEGG" id="mmu:12142"/>
<dbReference type="UCSC" id="uc007ezu.3">
    <molecule id="Q60636-1"/>
    <property type="organism name" value="mouse"/>
</dbReference>
<dbReference type="UCSC" id="uc007ezv.3">
    <molecule id="Q60636-2"/>
    <property type="organism name" value="mouse"/>
</dbReference>
<dbReference type="AGR" id="MGI:99655"/>
<dbReference type="CTD" id="639"/>
<dbReference type="MGI" id="MGI:99655">
    <property type="gene designation" value="Prdm1"/>
</dbReference>
<dbReference type="VEuPathDB" id="HostDB:ENSMUSG00000038151"/>
<dbReference type="eggNOG" id="KOG2461">
    <property type="taxonomic scope" value="Eukaryota"/>
</dbReference>
<dbReference type="GeneTree" id="ENSGT00940000154798"/>
<dbReference type="HOGENOM" id="CLU_007033_2_1_1"/>
<dbReference type="InParanoid" id="Q60636"/>
<dbReference type="OMA" id="LIMKMDM"/>
<dbReference type="OrthoDB" id="9345291at2759"/>
<dbReference type="PhylomeDB" id="Q60636"/>
<dbReference type="TreeFam" id="TF316545"/>
<dbReference type="BioGRID-ORCS" id="12142">
    <property type="hits" value="0 hits in 83 CRISPR screens"/>
</dbReference>
<dbReference type="ChiTaRS" id="Prdm1">
    <property type="organism name" value="mouse"/>
</dbReference>
<dbReference type="PRO" id="PR:Q60636"/>
<dbReference type="Proteomes" id="UP000000589">
    <property type="component" value="Chromosome 10"/>
</dbReference>
<dbReference type="RNAct" id="Q60636">
    <property type="molecule type" value="protein"/>
</dbReference>
<dbReference type="Bgee" id="ENSMUSG00000038151">
    <property type="expression patterns" value="Expressed in gastrula and 176 other cell types or tissues"/>
</dbReference>
<dbReference type="GO" id="GO:0005737">
    <property type="term" value="C:cytoplasm"/>
    <property type="evidence" value="ECO:0000314"/>
    <property type="project" value="MGI"/>
</dbReference>
<dbReference type="GO" id="GO:0005730">
    <property type="term" value="C:nucleolus"/>
    <property type="evidence" value="ECO:0007669"/>
    <property type="project" value="Ensembl"/>
</dbReference>
<dbReference type="GO" id="GO:0005654">
    <property type="term" value="C:nucleoplasm"/>
    <property type="evidence" value="ECO:0007669"/>
    <property type="project" value="Ensembl"/>
</dbReference>
<dbReference type="GO" id="GO:0005634">
    <property type="term" value="C:nucleus"/>
    <property type="evidence" value="ECO:0000314"/>
    <property type="project" value="MGI"/>
</dbReference>
<dbReference type="GO" id="GO:0001227">
    <property type="term" value="F:DNA-binding transcription repressor activity, RNA polymerase II-specific"/>
    <property type="evidence" value="ECO:0007669"/>
    <property type="project" value="Ensembl"/>
</dbReference>
<dbReference type="GO" id="GO:0042826">
    <property type="term" value="F:histone deacetylase binding"/>
    <property type="evidence" value="ECO:0000314"/>
    <property type="project" value="MGI"/>
</dbReference>
<dbReference type="GO" id="GO:1990226">
    <property type="term" value="F:histone methyltransferase binding"/>
    <property type="evidence" value="ECO:0000353"/>
    <property type="project" value="MGI"/>
</dbReference>
<dbReference type="GO" id="GO:0008168">
    <property type="term" value="F:methyltransferase activity"/>
    <property type="evidence" value="ECO:0007669"/>
    <property type="project" value="UniProtKB-KW"/>
</dbReference>
<dbReference type="GO" id="GO:1990841">
    <property type="term" value="F:promoter-specific chromatin binding"/>
    <property type="evidence" value="ECO:0000314"/>
    <property type="project" value="UniProtKB"/>
</dbReference>
<dbReference type="GO" id="GO:0000978">
    <property type="term" value="F:RNA polymerase II cis-regulatory region sequence-specific DNA binding"/>
    <property type="evidence" value="ECO:0007669"/>
    <property type="project" value="Ensembl"/>
</dbReference>
<dbReference type="GO" id="GO:0043565">
    <property type="term" value="F:sequence-specific DNA binding"/>
    <property type="evidence" value="ECO:0000314"/>
    <property type="project" value="MGI"/>
</dbReference>
<dbReference type="GO" id="GO:0000976">
    <property type="term" value="F:transcription cis-regulatory region binding"/>
    <property type="evidence" value="ECO:0000314"/>
    <property type="project" value="UniProtKB"/>
</dbReference>
<dbReference type="GO" id="GO:0008270">
    <property type="term" value="F:zinc ion binding"/>
    <property type="evidence" value="ECO:0007669"/>
    <property type="project" value="UniProtKB-KW"/>
</dbReference>
<dbReference type="GO" id="GO:0002250">
    <property type="term" value="P:adaptive immune response"/>
    <property type="evidence" value="ECO:0007669"/>
    <property type="project" value="UniProtKB-KW"/>
</dbReference>
<dbReference type="GO" id="GO:0035904">
    <property type="term" value="P:aorta development"/>
    <property type="evidence" value="ECO:0000315"/>
    <property type="project" value="MGI"/>
</dbReference>
<dbReference type="GO" id="GO:0048844">
    <property type="term" value="P:artery morphogenesis"/>
    <property type="evidence" value="ECO:0000315"/>
    <property type="project" value="MGI"/>
</dbReference>
<dbReference type="GO" id="GO:0003279">
    <property type="term" value="P:cardiac septum development"/>
    <property type="evidence" value="ECO:0000315"/>
    <property type="project" value="MGI"/>
</dbReference>
<dbReference type="GO" id="GO:0045165">
    <property type="term" value="P:cell fate commitment"/>
    <property type="evidence" value="ECO:0000315"/>
    <property type="project" value="MGI"/>
</dbReference>
<dbReference type="GO" id="GO:0060976">
    <property type="term" value="P:coronary vasculature development"/>
    <property type="evidence" value="ECO:0000315"/>
    <property type="project" value="MGI"/>
</dbReference>
<dbReference type="GO" id="GO:0001892">
    <property type="term" value="P:embryonic placenta development"/>
    <property type="evidence" value="ECO:0000315"/>
    <property type="project" value="MGI"/>
</dbReference>
<dbReference type="GO" id="GO:0042462">
    <property type="term" value="P:eye photoreceptor cell development"/>
    <property type="evidence" value="ECO:0000315"/>
    <property type="project" value="MGI"/>
</dbReference>
<dbReference type="GO" id="GO:0010467">
    <property type="term" value="P:gene expression"/>
    <property type="evidence" value="ECO:0000314"/>
    <property type="project" value="MGI"/>
</dbReference>
<dbReference type="GO" id="GO:0007281">
    <property type="term" value="P:germ cell development"/>
    <property type="evidence" value="ECO:0000316"/>
    <property type="project" value="MGI"/>
</dbReference>
<dbReference type="GO" id="GO:0003170">
    <property type="term" value="P:heart valve development"/>
    <property type="evidence" value="ECO:0000315"/>
    <property type="project" value="MGI"/>
</dbReference>
<dbReference type="GO" id="GO:0001701">
    <property type="term" value="P:in utero embryonic development"/>
    <property type="evidence" value="ECO:0000315"/>
    <property type="project" value="MGI"/>
</dbReference>
<dbReference type="GO" id="GO:0045087">
    <property type="term" value="P:innate immune response"/>
    <property type="evidence" value="ECO:0007669"/>
    <property type="project" value="UniProtKB-KW"/>
</dbReference>
<dbReference type="GO" id="GO:0060576">
    <property type="term" value="P:intestinal epithelial cell development"/>
    <property type="evidence" value="ECO:0000315"/>
    <property type="project" value="MGI"/>
</dbReference>
<dbReference type="GO" id="GO:0001822">
    <property type="term" value="P:kidney development"/>
    <property type="evidence" value="ECO:0000315"/>
    <property type="project" value="MGI"/>
</dbReference>
<dbReference type="GO" id="GO:0001893">
    <property type="term" value="P:maternal placenta development"/>
    <property type="evidence" value="ECO:0000315"/>
    <property type="project" value="MGI"/>
</dbReference>
<dbReference type="GO" id="GO:0032259">
    <property type="term" value="P:methylation"/>
    <property type="evidence" value="ECO:0007669"/>
    <property type="project" value="UniProtKB-KW"/>
</dbReference>
<dbReference type="GO" id="GO:0001763">
    <property type="term" value="P:morphogenesis of a branching structure"/>
    <property type="evidence" value="ECO:0000315"/>
    <property type="project" value="MGI"/>
</dbReference>
<dbReference type="GO" id="GO:0030889">
    <property type="term" value="P:negative regulation of B cell proliferation"/>
    <property type="evidence" value="ECO:0000314"/>
    <property type="project" value="MGI"/>
</dbReference>
<dbReference type="GO" id="GO:0010629">
    <property type="term" value="P:negative regulation of gene expression"/>
    <property type="evidence" value="ECO:0000315"/>
    <property type="project" value="MGI"/>
</dbReference>
<dbReference type="GO" id="GO:0031665">
    <property type="term" value="P:negative regulation of lipopolysaccharide-mediated signaling pathway"/>
    <property type="evidence" value="ECO:0000314"/>
    <property type="project" value="MGI"/>
</dbReference>
<dbReference type="GO" id="GO:0000122">
    <property type="term" value="P:negative regulation of transcription by RNA polymerase II"/>
    <property type="evidence" value="ECO:0000314"/>
    <property type="project" value="MGI"/>
</dbReference>
<dbReference type="GO" id="GO:0045579">
    <property type="term" value="P:positive regulation of B cell differentiation"/>
    <property type="evidence" value="ECO:0000314"/>
    <property type="project" value="MGI"/>
</dbReference>
<dbReference type="GO" id="GO:0010628">
    <property type="term" value="P:positive regulation of gene expression"/>
    <property type="evidence" value="ECO:0000314"/>
    <property type="project" value="MGI"/>
</dbReference>
<dbReference type="GO" id="GO:0009791">
    <property type="term" value="P:post-embryonic development"/>
    <property type="evidence" value="ECO:0000315"/>
    <property type="project" value="MGI"/>
</dbReference>
<dbReference type="GO" id="GO:0042127">
    <property type="term" value="P:regulation of cell population proliferation"/>
    <property type="evidence" value="ECO:0000315"/>
    <property type="project" value="MGI"/>
</dbReference>
<dbReference type="GO" id="GO:0033082">
    <property type="term" value="P:regulation of extrathymic T cell differentiation"/>
    <property type="evidence" value="ECO:0000315"/>
    <property type="project" value="UniProtKB"/>
</dbReference>
<dbReference type="GO" id="GO:0032823">
    <property type="term" value="P:regulation of natural killer cell differentiation"/>
    <property type="evidence" value="ECO:0000315"/>
    <property type="project" value="UniProtKB"/>
</dbReference>
<dbReference type="GO" id="GO:0051136">
    <property type="term" value="P:regulation of NK T cell differentiation"/>
    <property type="evidence" value="ECO:0000315"/>
    <property type="project" value="UniProtKB"/>
</dbReference>
<dbReference type="GO" id="GO:0006357">
    <property type="term" value="P:regulation of transcription by RNA polymerase II"/>
    <property type="evidence" value="ECO:0000315"/>
    <property type="project" value="MGI"/>
</dbReference>
<dbReference type="GO" id="GO:0060040">
    <property type="term" value="P:retinal bipolar neuron differentiation"/>
    <property type="evidence" value="ECO:0000315"/>
    <property type="project" value="MGI"/>
</dbReference>
<dbReference type="GO" id="GO:1990654">
    <property type="term" value="P:sebum secreting cell proliferation"/>
    <property type="evidence" value="ECO:0000314"/>
    <property type="project" value="MGI"/>
</dbReference>
<dbReference type="GO" id="GO:0060707">
    <property type="term" value="P:trophoblast giant cell differentiation"/>
    <property type="evidence" value="ECO:0000315"/>
    <property type="project" value="MGI"/>
</dbReference>
<dbReference type="GO" id="GO:0003281">
    <property type="term" value="P:ventricular septum development"/>
    <property type="evidence" value="ECO:0000315"/>
    <property type="project" value="MGI"/>
</dbReference>
<dbReference type="CDD" id="cd19187">
    <property type="entry name" value="PR-SET_PRDM1"/>
    <property type="match status" value="1"/>
</dbReference>
<dbReference type="FunFam" id="3.30.160.60:FF:000748">
    <property type="entry name" value="PR domain zinc finger protein"/>
    <property type="match status" value="1"/>
</dbReference>
<dbReference type="FunFam" id="2.170.270.10:FF:000019">
    <property type="entry name" value="PR domain zinc finger protein 1"/>
    <property type="match status" value="1"/>
</dbReference>
<dbReference type="FunFam" id="3.30.160.60:FF:000132">
    <property type="entry name" value="PR domain zinc finger protein 1"/>
    <property type="match status" value="1"/>
</dbReference>
<dbReference type="FunFam" id="3.30.160.60:FF:000211">
    <property type="entry name" value="PR domain zinc finger protein 1"/>
    <property type="match status" value="1"/>
</dbReference>
<dbReference type="FunFam" id="3.30.160.60:FF:000262">
    <property type="entry name" value="PR domain zinc finger protein 1"/>
    <property type="match status" value="1"/>
</dbReference>
<dbReference type="FunFam" id="3.30.160.60:FF:000446">
    <property type="entry name" value="Zinc finger protein"/>
    <property type="match status" value="1"/>
</dbReference>
<dbReference type="Gene3D" id="3.30.160.60">
    <property type="entry name" value="Classic Zinc Finger"/>
    <property type="match status" value="5"/>
</dbReference>
<dbReference type="Gene3D" id="2.170.270.10">
    <property type="entry name" value="SET domain"/>
    <property type="match status" value="1"/>
</dbReference>
<dbReference type="InterPro" id="IPR016608">
    <property type="entry name" value="PRDM1"/>
</dbReference>
<dbReference type="InterPro" id="IPR044413">
    <property type="entry name" value="PRDM1_PR-SET"/>
</dbReference>
<dbReference type="InterPro" id="IPR001214">
    <property type="entry name" value="SET_dom"/>
</dbReference>
<dbReference type="InterPro" id="IPR046341">
    <property type="entry name" value="SET_dom_sf"/>
</dbReference>
<dbReference type="InterPro" id="IPR050331">
    <property type="entry name" value="Zinc_finger"/>
</dbReference>
<dbReference type="InterPro" id="IPR036236">
    <property type="entry name" value="Znf_C2H2_sf"/>
</dbReference>
<dbReference type="InterPro" id="IPR013087">
    <property type="entry name" value="Znf_C2H2_type"/>
</dbReference>
<dbReference type="PANTHER" id="PTHR16515">
    <property type="entry name" value="PR DOMAIN ZINC FINGER PROTEIN"/>
    <property type="match status" value="1"/>
</dbReference>
<dbReference type="PANTHER" id="PTHR16515:SF63">
    <property type="entry name" value="PR DOMAIN ZINC FINGER PROTEIN 1"/>
    <property type="match status" value="1"/>
</dbReference>
<dbReference type="Pfam" id="PF21549">
    <property type="entry name" value="PRDM2_PR"/>
    <property type="match status" value="1"/>
</dbReference>
<dbReference type="Pfam" id="PF00096">
    <property type="entry name" value="zf-C2H2"/>
    <property type="match status" value="4"/>
</dbReference>
<dbReference type="PIRSF" id="PIRSF013212">
    <property type="entry name" value="PRDM1"/>
    <property type="match status" value="1"/>
</dbReference>
<dbReference type="SMART" id="SM00317">
    <property type="entry name" value="SET"/>
    <property type="match status" value="1"/>
</dbReference>
<dbReference type="SMART" id="SM00355">
    <property type="entry name" value="ZnF_C2H2"/>
    <property type="match status" value="5"/>
</dbReference>
<dbReference type="SUPFAM" id="SSF57667">
    <property type="entry name" value="beta-beta-alpha zinc fingers"/>
    <property type="match status" value="3"/>
</dbReference>
<dbReference type="SUPFAM" id="SSF82199">
    <property type="entry name" value="SET domain"/>
    <property type="match status" value="1"/>
</dbReference>
<dbReference type="PROSITE" id="PS50280">
    <property type="entry name" value="SET"/>
    <property type="match status" value="1"/>
</dbReference>
<dbReference type="PROSITE" id="PS00028">
    <property type="entry name" value="ZINC_FINGER_C2H2_1"/>
    <property type="match status" value="4"/>
</dbReference>
<dbReference type="PROSITE" id="PS50157">
    <property type="entry name" value="ZINC_FINGER_C2H2_2"/>
    <property type="match status" value="4"/>
</dbReference>
<protein>
    <recommendedName>
        <fullName>PR domain zinc finger protein 1</fullName>
        <ecNumber>2.1.1.-</ecNumber>
    </recommendedName>
    <alternativeName>
        <fullName>B lymphocyte-induced maturation protein 1</fullName>
        <shortName>Blimp-1</shortName>
    </alternativeName>
    <alternativeName>
        <fullName>Beta-interferon gene positive regulatory domain I-binding factor</fullName>
    </alternativeName>
    <alternativeName>
        <fullName>PR domain-containing protein 1</fullName>
    </alternativeName>
</protein>
<feature type="chain" id="PRO_0000047758" description="PR domain zinc finger protein 1">
    <location>
        <begin position="1"/>
        <end position="856"/>
    </location>
</feature>
<feature type="domain" description="SET" evidence="4">
    <location>
        <begin position="115"/>
        <end position="233"/>
    </location>
</feature>
<feature type="zinc finger region" description="C2H2-type 1" evidence="3">
    <location>
        <begin position="606"/>
        <end position="628"/>
    </location>
</feature>
<feature type="zinc finger region" description="C2H2-type 2" evidence="3">
    <location>
        <begin position="634"/>
        <end position="656"/>
    </location>
</feature>
<feature type="zinc finger region" description="C2H2-type 3" evidence="3">
    <location>
        <begin position="662"/>
        <end position="684"/>
    </location>
</feature>
<feature type="zinc finger region" description="C2H2-type 4" evidence="3">
    <location>
        <begin position="690"/>
        <end position="712"/>
    </location>
</feature>
<feature type="region of interest" description="Disordered" evidence="5">
    <location>
        <begin position="357"/>
        <end position="399"/>
    </location>
</feature>
<feature type="region of interest" description="Disordered" evidence="5">
    <location>
        <begin position="532"/>
        <end position="571"/>
    </location>
</feature>
<feature type="region of interest" description="Interaction with PIAS1" evidence="1">
    <location>
        <begin position="558"/>
        <end position="605"/>
    </location>
</feature>
<feature type="compositionally biased region" description="Low complexity" evidence="5">
    <location>
        <begin position="373"/>
        <end position="393"/>
    </location>
</feature>
<feature type="compositionally biased region" description="Low complexity" evidence="5">
    <location>
        <begin position="542"/>
        <end position="556"/>
    </location>
</feature>
<feature type="cross-link" description="Glycyl lysine isopeptide (Lys-Gly) (interchain with G-Cter in SUMO1); alternate" evidence="2">
    <location>
        <position position="847"/>
    </location>
</feature>
<feature type="cross-link" description="Glycyl lysine isopeptide (Lys-Gly) (interchain with G-Cter in SUMO2); alternate" evidence="2">
    <location>
        <position position="847"/>
    </location>
</feature>
<feature type="splice variant" id="VSP_041570" description="In isoform 3." evidence="13">
    <location>
        <begin position="1"/>
        <end position="67"/>
    </location>
</feature>
<feature type="splice variant" id="VSP_039189" description="In isoform 2." evidence="12 13">
    <original>MREAYLRCWIFSWKNVWVRPCQRLHFKTVLLQGSLLYTALDSYSTVQ</original>
    <variation>MLDLLLEKRVGTTL</variation>
    <location>
        <begin position="1"/>
        <end position="47"/>
    </location>
</feature>
<feature type="splice variant" id="VSP_041571" description="In isoform 4." evidence="14">
    <original>MREAYLRCWIFSWKNVWVRPCQRLHFKTVLLQGSLLYTALDSYSTVQ</original>
    <variation>MTPGVPGHRTQQRPQHISALSDKAKDCSK</variation>
    <location>
        <begin position="1"/>
        <end position="47"/>
    </location>
</feature>
<feature type="splice variant" id="VSP_041572" description="In isoform 5." evidence="14">
    <location>
        <begin position="624"/>
        <end position="666"/>
    </location>
</feature>
<feature type="sequence conflict" description="In Ref. 4; AAI29802." evidence="14" ref="4">
    <original>N</original>
    <variation>K</variation>
    <location>
        <position position="155"/>
    </location>
</feature>
<feature type="sequence conflict" description="In Ref. 3; AK077622." evidence="14" ref="3">
    <original>L</original>
    <variation>M</variation>
    <location>
        <position position="205"/>
    </location>
</feature>
<reference key="1">
    <citation type="journal article" date="1994" name="Cell">
        <title>Blimp-1, a novel zinc finger-containing protein that can drive the maturation of B lymphocytes into immunoglobulin-secreting cells.</title>
        <authorList>
            <person name="Turner C.A."/>
            <person name="Mack D.H."/>
            <person name="Davis M.M."/>
        </authorList>
    </citation>
    <scope>NUCLEOTIDE SEQUENCE [MRNA] (ISOFORM 1)</scope>
    <scope>SUBCELLULAR LOCATION</scope>
    <scope>TISSUE SPECIFICITY</scope>
    <source>
        <strain>BALB/cJ</strain>
        <tissue>B-cell</tissue>
    </source>
</reference>
<reference key="2">
    <citation type="journal article" date="2000" name="Nucleic Acids Res.">
        <title>Characterization of the B lymphocyte-induced maturation protein-1 (Blimp-1) gene, mRNA isoforms and basal promoter.</title>
        <authorList>
            <person name="Tunyaplin C."/>
            <person name="Shapiro M.A."/>
            <person name="Calame K.L."/>
        </authorList>
    </citation>
    <scope>NUCLEOTIDE SEQUENCE [GENOMIC DNA]</scope>
    <scope>ALTERNATIVE SPLICING (ISOFORMS 1 AND 5)</scope>
    <scope>TISSUE SPECIFICITY</scope>
    <source>
        <strain>129</strain>
    </source>
</reference>
<reference key="3">
    <citation type="journal article" date="2005" name="Science">
        <title>The transcriptional landscape of the mammalian genome.</title>
        <authorList>
            <person name="Carninci P."/>
            <person name="Kasukawa T."/>
            <person name="Katayama S."/>
            <person name="Gough J."/>
            <person name="Frith M.C."/>
            <person name="Maeda N."/>
            <person name="Oyama R."/>
            <person name="Ravasi T."/>
            <person name="Lenhard B."/>
            <person name="Wells C."/>
            <person name="Kodzius R."/>
            <person name="Shimokawa K."/>
            <person name="Bajic V.B."/>
            <person name="Brenner S.E."/>
            <person name="Batalov S."/>
            <person name="Forrest A.R."/>
            <person name="Zavolan M."/>
            <person name="Davis M.J."/>
            <person name="Wilming L.G."/>
            <person name="Aidinis V."/>
            <person name="Allen J.E."/>
            <person name="Ambesi-Impiombato A."/>
            <person name="Apweiler R."/>
            <person name="Aturaliya R.N."/>
            <person name="Bailey T.L."/>
            <person name="Bansal M."/>
            <person name="Baxter L."/>
            <person name="Beisel K.W."/>
            <person name="Bersano T."/>
            <person name="Bono H."/>
            <person name="Chalk A.M."/>
            <person name="Chiu K.P."/>
            <person name="Choudhary V."/>
            <person name="Christoffels A."/>
            <person name="Clutterbuck D.R."/>
            <person name="Crowe M.L."/>
            <person name="Dalla E."/>
            <person name="Dalrymple B.P."/>
            <person name="de Bono B."/>
            <person name="Della Gatta G."/>
            <person name="di Bernardo D."/>
            <person name="Down T."/>
            <person name="Engstrom P."/>
            <person name="Fagiolini M."/>
            <person name="Faulkner G."/>
            <person name="Fletcher C.F."/>
            <person name="Fukushima T."/>
            <person name="Furuno M."/>
            <person name="Futaki S."/>
            <person name="Gariboldi M."/>
            <person name="Georgii-Hemming P."/>
            <person name="Gingeras T.R."/>
            <person name="Gojobori T."/>
            <person name="Green R.E."/>
            <person name="Gustincich S."/>
            <person name="Harbers M."/>
            <person name="Hayashi Y."/>
            <person name="Hensch T.K."/>
            <person name="Hirokawa N."/>
            <person name="Hill D."/>
            <person name="Huminiecki L."/>
            <person name="Iacono M."/>
            <person name="Ikeo K."/>
            <person name="Iwama A."/>
            <person name="Ishikawa T."/>
            <person name="Jakt M."/>
            <person name="Kanapin A."/>
            <person name="Katoh M."/>
            <person name="Kawasawa Y."/>
            <person name="Kelso J."/>
            <person name="Kitamura H."/>
            <person name="Kitano H."/>
            <person name="Kollias G."/>
            <person name="Krishnan S.P."/>
            <person name="Kruger A."/>
            <person name="Kummerfeld S.K."/>
            <person name="Kurochkin I.V."/>
            <person name="Lareau L.F."/>
            <person name="Lazarevic D."/>
            <person name="Lipovich L."/>
            <person name="Liu J."/>
            <person name="Liuni S."/>
            <person name="McWilliam S."/>
            <person name="Madan Babu M."/>
            <person name="Madera M."/>
            <person name="Marchionni L."/>
            <person name="Matsuda H."/>
            <person name="Matsuzawa S."/>
            <person name="Miki H."/>
            <person name="Mignone F."/>
            <person name="Miyake S."/>
            <person name="Morris K."/>
            <person name="Mottagui-Tabar S."/>
            <person name="Mulder N."/>
            <person name="Nakano N."/>
            <person name="Nakauchi H."/>
            <person name="Ng P."/>
            <person name="Nilsson R."/>
            <person name="Nishiguchi S."/>
            <person name="Nishikawa S."/>
            <person name="Nori F."/>
            <person name="Ohara O."/>
            <person name="Okazaki Y."/>
            <person name="Orlando V."/>
            <person name="Pang K.C."/>
            <person name="Pavan W.J."/>
            <person name="Pavesi G."/>
            <person name="Pesole G."/>
            <person name="Petrovsky N."/>
            <person name="Piazza S."/>
            <person name="Reed J."/>
            <person name="Reid J.F."/>
            <person name="Ring B.Z."/>
            <person name="Ringwald M."/>
            <person name="Rost B."/>
            <person name="Ruan Y."/>
            <person name="Salzberg S.L."/>
            <person name="Sandelin A."/>
            <person name="Schneider C."/>
            <person name="Schoenbach C."/>
            <person name="Sekiguchi K."/>
            <person name="Semple C.A."/>
            <person name="Seno S."/>
            <person name="Sessa L."/>
            <person name="Sheng Y."/>
            <person name="Shibata Y."/>
            <person name="Shimada H."/>
            <person name="Shimada K."/>
            <person name="Silva D."/>
            <person name="Sinclair B."/>
            <person name="Sperling S."/>
            <person name="Stupka E."/>
            <person name="Sugiura K."/>
            <person name="Sultana R."/>
            <person name="Takenaka Y."/>
            <person name="Taki K."/>
            <person name="Tammoja K."/>
            <person name="Tan S.L."/>
            <person name="Tang S."/>
            <person name="Taylor M.S."/>
            <person name="Tegner J."/>
            <person name="Teichmann S.A."/>
            <person name="Ueda H.R."/>
            <person name="van Nimwegen E."/>
            <person name="Verardo R."/>
            <person name="Wei C.L."/>
            <person name="Yagi K."/>
            <person name="Yamanishi H."/>
            <person name="Zabarovsky E."/>
            <person name="Zhu S."/>
            <person name="Zimmer A."/>
            <person name="Hide W."/>
            <person name="Bult C."/>
            <person name="Grimmond S.M."/>
            <person name="Teasdale R.D."/>
            <person name="Liu E.T."/>
            <person name="Brusic V."/>
            <person name="Quackenbush J."/>
            <person name="Wahlestedt C."/>
            <person name="Mattick J.S."/>
            <person name="Hume D.A."/>
            <person name="Kai C."/>
            <person name="Sasaki D."/>
            <person name="Tomaru Y."/>
            <person name="Fukuda S."/>
            <person name="Kanamori-Katayama M."/>
            <person name="Suzuki M."/>
            <person name="Aoki J."/>
            <person name="Arakawa T."/>
            <person name="Iida J."/>
            <person name="Imamura K."/>
            <person name="Itoh M."/>
            <person name="Kato T."/>
            <person name="Kawaji H."/>
            <person name="Kawagashira N."/>
            <person name="Kawashima T."/>
            <person name="Kojima M."/>
            <person name="Kondo S."/>
            <person name="Konno H."/>
            <person name="Nakano K."/>
            <person name="Ninomiya N."/>
            <person name="Nishio T."/>
            <person name="Okada M."/>
            <person name="Plessy C."/>
            <person name="Shibata K."/>
            <person name="Shiraki T."/>
            <person name="Suzuki S."/>
            <person name="Tagami M."/>
            <person name="Waki K."/>
            <person name="Watahiki A."/>
            <person name="Okamura-Oho Y."/>
            <person name="Suzuki H."/>
            <person name="Kawai J."/>
            <person name="Hayashizaki Y."/>
        </authorList>
    </citation>
    <scope>NUCLEOTIDE SEQUENCE [LARGE SCALE MRNA] (ISOFORM 2)</scope>
    <scope>NUCLEOTIDE SEQUENCE [MRNA] OF 1-253 (ISOFORM 3)</scope>
    <source>
        <strain>C57BL/6J</strain>
        <tissue>Embryo</tissue>
        <tissue>Retina</tissue>
    </source>
</reference>
<reference key="4">
    <citation type="journal article" date="2004" name="Genome Res.">
        <title>The status, quality, and expansion of the NIH full-length cDNA project: the Mammalian Gene Collection (MGC).</title>
        <authorList>
            <consortium name="The MGC Project Team"/>
        </authorList>
    </citation>
    <scope>NUCLEOTIDE SEQUENCE [LARGE SCALE MRNA] (ISOFORM 2)</scope>
</reference>
<reference key="5">
    <citation type="journal article" date="2006" name="Nat. Cell Biol.">
        <title>Blimp1 associates with Prmt5 and directs histone arginine methylation in mouse germ cells.</title>
        <authorList>
            <person name="Ancelin K."/>
            <person name="Lange U.C."/>
            <person name="Hajkova P."/>
            <person name="Schneider R."/>
            <person name="Bannister A.J."/>
            <person name="Kouzarides T."/>
            <person name="Surani M.A."/>
        </authorList>
    </citation>
    <scope>INTERACTION WITH PRMT5</scope>
</reference>
<reference key="6">
    <citation type="journal article" date="2009" name="Mol. Cell. Biol.">
        <title>Blimp-1/Prdm1 alternative promoter usage during mouse development and plasma cell differentiation.</title>
        <authorList>
            <person name="Morgan M.A."/>
            <person name="Magnusdottir E."/>
            <person name="Kuo T.C."/>
            <person name="Tunyaplin C."/>
            <person name="Harper J."/>
            <person name="Arnold S.J."/>
            <person name="Calame K."/>
            <person name="Robertson E.J."/>
            <person name="Bikoff E.K."/>
        </authorList>
    </citation>
    <scope>ALTERNATIVE PROMOTER USAGE (ISOFORMS 3 AND 4)</scope>
    <scope>ALTERNATIVE SPLICING (ISOFORMS 1 AND 2)</scope>
    <scope>TISSUE SPECIFICITY (ISOFORMS 3 AND 4)</scope>
    <scope>DISRUPTION PHENOTYPE</scope>
    <source>
        <tissue>Embryo</tissue>
        <tissue>Placenta</tissue>
        <tissue>Yolk sac</tissue>
    </source>
</reference>
<reference key="7">
    <citation type="journal article" date="2016" name="Science">
        <title>Hobit and Blimp1 instruct a universal transcriptional program of tissue residency in lymphocytes.</title>
        <authorList>
            <person name="Mackay L.K."/>
            <person name="Minnich M."/>
            <person name="Kragten N.A."/>
            <person name="Liao Y."/>
            <person name="Nota B."/>
            <person name="Seillet C."/>
            <person name="Zaid A."/>
            <person name="Man K."/>
            <person name="Preston S."/>
            <person name="Freestone D."/>
            <person name="Braun A."/>
            <person name="Wynne-Jones E."/>
            <person name="Behr F.M."/>
            <person name="Stark R."/>
            <person name="Pellicci D.G."/>
            <person name="Godfrey D.I."/>
            <person name="Belz G.T."/>
            <person name="Pellegrini M."/>
            <person name="Gebhardt T."/>
            <person name="Busslinger M."/>
            <person name="Shi W."/>
            <person name="Carbone F.R."/>
            <person name="van Lier R.A."/>
            <person name="Kallies A."/>
            <person name="van Gisbergen K.P."/>
        </authorList>
    </citation>
    <scope>FUNCTION</scope>
    <scope>DISRUPTION PHENOTYPE</scope>
    <scope>CONDITIONAL KNOCKOUT IN LYMPHOCYTE T CELLS</scope>
    <scope>TISSUE SPECIFICITY</scope>
    <scope>INDUCTION (MICROBIAL INFECTION)</scope>
</reference>
<reference key="8">
    <citation type="journal article" date="2020" name="FASEB J.">
        <title>Early estrogen-induced gene 1 facilitates osteoclast formation through the inhibition of interferon regulatory factor 8 expression.</title>
        <authorList>
            <person name="Jeong E."/>
            <person name="Kim J."/>
            <person name="Go M."/>
            <person name="Lee S.Y."/>
        </authorList>
    </citation>
    <scope>FUNCTION</scope>
    <scope>INTERACTION WITH EEIG1</scope>
    <scope>TISSUE SPECIFICITY</scope>
</reference>
<organism>
    <name type="scientific">Mus musculus</name>
    <name type="common">Mouse</name>
    <dbReference type="NCBI Taxonomy" id="10090"/>
    <lineage>
        <taxon>Eukaryota</taxon>
        <taxon>Metazoa</taxon>
        <taxon>Chordata</taxon>
        <taxon>Craniata</taxon>
        <taxon>Vertebrata</taxon>
        <taxon>Euteleostomi</taxon>
        <taxon>Mammalia</taxon>
        <taxon>Eutheria</taxon>
        <taxon>Euarchontoglires</taxon>
        <taxon>Glires</taxon>
        <taxon>Rodentia</taxon>
        <taxon>Myomorpha</taxon>
        <taxon>Muroidea</taxon>
        <taxon>Muridae</taxon>
        <taxon>Murinae</taxon>
        <taxon>Mus</taxon>
        <taxon>Mus</taxon>
    </lineage>
</organism>
<keyword id="KW-1064">Adaptive immunity</keyword>
<keyword id="KW-0877">Alternative promoter usage</keyword>
<keyword id="KW-0025">Alternative splicing</keyword>
<keyword id="KW-0963">Cytoplasm</keyword>
<keyword id="KW-0217">Developmental protein</keyword>
<keyword id="KW-0238">DNA-binding</keyword>
<keyword id="KW-0391">Immunity</keyword>
<keyword id="KW-0399">Innate immunity</keyword>
<keyword id="KW-1017">Isopeptide bond</keyword>
<keyword id="KW-0479">Metal-binding</keyword>
<keyword id="KW-0489">Methyltransferase</keyword>
<keyword id="KW-0539">Nucleus</keyword>
<keyword id="KW-1185">Reference proteome</keyword>
<keyword id="KW-0677">Repeat</keyword>
<keyword id="KW-0678">Repressor</keyword>
<keyword id="KW-0949">S-adenosyl-L-methionine</keyword>
<keyword id="KW-0804">Transcription</keyword>
<keyword id="KW-0805">Transcription regulation</keyword>
<keyword id="KW-0808">Transferase</keyword>
<keyword id="KW-0832">Ubl conjugation</keyword>
<keyword id="KW-0862">Zinc</keyword>
<keyword id="KW-0863">Zinc-finger</keyword>
<evidence type="ECO:0000250" key="1"/>
<evidence type="ECO:0000250" key="2">
    <source>
        <dbReference type="UniProtKB" id="O75626"/>
    </source>
</evidence>
<evidence type="ECO:0000255" key="3">
    <source>
        <dbReference type="PROSITE-ProRule" id="PRU00042"/>
    </source>
</evidence>
<evidence type="ECO:0000255" key="4">
    <source>
        <dbReference type="PROSITE-ProRule" id="PRU00190"/>
    </source>
</evidence>
<evidence type="ECO:0000256" key="5">
    <source>
        <dbReference type="SAM" id="MobiDB-lite"/>
    </source>
</evidence>
<evidence type="ECO:0000269" key="6">
    <source>
    </source>
</evidence>
<evidence type="ECO:0000269" key="7">
    <source>
    </source>
</evidence>
<evidence type="ECO:0000269" key="8">
    <source>
    </source>
</evidence>
<evidence type="ECO:0000269" key="9">
    <source>
    </source>
</evidence>
<evidence type="ECO:0000269" key="10">
    <source>
    </source>
</evidence>
<evidence type="ECO:0000269" key="11">
    <source>
    </source>
</evidence>
<evidence type="ECO:0000303" key="12">
    <source>
    </source>
</evidence>
<evidence type="ECO:0000303" key="13">
    <source>
    </source>
</evidence>
<evidence type="ECO:0000305" key="14"/>
<name>PRDM1_MOUSE</name>